<reference key="1">
    <citation type="journal article" date="1991" name="Gene">
        <title>Isolation and characterization of a novel interferon-alpha-encoding gene, IFN-alpha 11, within a murine IFN cluster.</title>
        <authorList>
            <person name="Coulombel C."/>
            <person name="Vodjdani G."/>
            <person name="Doly J."/>
        </authorList>
    </citation>
    <scope>NUCLEOTIDE SEQUENCE [GENOMIC DNA]</scope>
</reference>
<reference key="2">
    <citation type="journal article" date="2004" name="J. Virol.">
        <title>Characterization of the murine alpha interferon gene family.</title>
        <authorList>
            <person name="van Pesch V."/>
            <person name="Lanaya H."/>
            <person name="Renauld J.C."/>
            <person name="Michiels T."/>
        </authorList>
    </citation>
    <scope>NUCLEOTIDE SEQUENCE [MRNA]</scope>
    <scope>GLYCOSYLATION</scope>
    <scope>FUNCTION</scope>
    <source>
        <strain>C57BL/6J</strain>
    </source>
</reference>
<reference key="3">
    <citation type="journal article" date="2009" name="PLoS Biol.">
        <title>Lineage-specific biology revealed by a finished genome assembly of the mouse.</title>
        <authorList>
            <person name="Church D.M."/>
            <person name="Goodstadt L."/>
            <person name="Hillier L.W."/>
            <person name="Zody M.C."/>
            <person name="Goldstein S."/>
            <person name="She X."/>
            <person name="Bult C.J."/>
            <person name="Agarwala R."/>
            <person name="Cherry J.L."/>
            <person name="DiCuccio M."/>
            <person name="Hlavina W."/>
            <person name="Kapustin Y."/>
            <person name="Meric P."/>
            <person name="Maglott D."/>
            <person name="Birtle Z."/>
            <person name="Marques A.C."/>
            <person name="Graves T."/>
            <person name="Zhou S."/>
            <person name="Teague B."/>
            <person name="Potamousis K."/>
            <person name="Churas C."/>
            <person name="Place M."/>
            <person name="Herschleb J."/>
            <person name="Runnheim R."/>
            <person name="Forrest D."/>
            <person name="Amos-Landgraf J."/>
            <person name="Schwartz D.C."/>
            <person name="Cheng Z."/>
            <person name="Lindblad-Toh K."/>
            <person name="Eichler E.E."/>
            <person name="Ponting C.P."/>
        </authorList>
    </citation>
    <scope>NUCLEOTIDE SEQUENCE [LARGE SCALE GENOMIC DNA]</scope>
    <source>
        <strain>C57BL/6J</strain>
    </source>
</reference>
<reference key="4">
    <citation type="journal article" date="2004" name="Genome Res.">
        <title>The status, quality, and expansion of the NIH full-length cDNA project: the Mammalian Gene Collection (MGC).</title>
        <authorList>
            <consortium name="The MGC Project Team"/>
        </authorList>
    </citation>
    <scope>NUCLEOTIDE SEQUENCE [LARGE SCALE MRNA]</scope>
    <source>
        <tissue>Brain</tissue>
    </source>
</reference>
<reference key="5">
    <citation type="journal article" date="2012" name="PLoS Pathog.">
        <title>Interferon-alpha subtype 11 activates NK cells and enables control of retroviral infection.</title>
        <authorList>
            <person name="Gibbert K."/>
            <person name="Joedicke J.J."/>
            <person name="Meryk A."/>
            <person name="Trilling M."/>
            <person name="Francois S."/>
            <person name="Duppach J."/>
            <person name="Kraft A."/>
            <person name="Lang K.S."/>
            <person name="Dittmer U."/>
        </authorList>
    </citation>
    <scope>FUNCTION</scope>
</reference>
<proteinExistence type="evidence at protein level"/>
<keyword id="KW-0051">Antiviral defense</keyword>
<keyword id="KW-0202">Cytokine</keyword>
<keyword id="KW-1015">Disulfide bond</keyword>
<keyword id="KW-0325">Glycoprotein</keyword>
<keyword id="KW-1185">Reference proteome</keyword>
<keyword id="KW-0964">Secreted</keyword>
<keyword id="KW-0732">Signal</keyword>
<protein>
    <recommendedName>
        <fullName>Interferon alpha-11</fullName>
        <shortName>IFN-alpha-11</shortName>
    </recommendedName>
    <alternativeName>
        <fullName>Limitin</fullName>
    </alternativeName>
</protein>
<organism>
    <name type="scientific">Mus musculus</name>
    <name type="common">Mouse</name>
    <dbReference type="NCBI Taxonomy" id="10090"/>
    <lineage>
        <taxon>Eukaryota</taxon>
        <taxon>Metazoa</taxon>
        <taxon>Chordata</taxon>
        <taxon>Craniata</taxon>
        <taxon>Vertebrata</taxon>
        <taxon>Euteleostomi</taxon>
        <taxon>Mammalia</taxon>
        <taxon>Eutheria</taxon>
        <taxon>Euarchontoglires</taxon>
        <taxon>Glires</taxon>
        <taxon>Rodentia</taxon>
        <taxon>Myomorpha</taxon>
        <taxon>Muroidea</taxon>
        <taxon>Muridae</taxon>
        <taxon>Murinae</taxon>
        <taxon>Mus</taxon>
        <taxon>Mus</taxon>
    </lineage>
</organism>
<feature type="signal peptide" evidence="2">
    <location>
        <begin position="1"/>
        <end position="23"/>
    </location>
</feature>
<feature type="chain" id="PRO_0000317634" description="Interferon alpha-11">
    <location>
        <begin position="24"/>
        <end position="190"/>
    </location>
</feature>
<feature type="glycosylation site" description="N-linked (GlcNAc...) asparagine" evidence="5">
    <location>
        <position position="101"/>
    </location>
</feature>
<feature type="disulfide bond" evidence="1">
    <location>
        <begin position="24"/>
        <end position="122"/>
    </location>
</feature>
<feature type="disulfide bond" evidence="1">
    <location>
        <begin position="52"/>
        <end position="162"/>
    </location>
</feature>
<feature type="sequence conflict" description="In Ref. 4; AAI16871/AAI16873 and 1; AAA37883." evidence="5" ref="4 1">
    <original>T</original>
    <variation>S</variation>
    <location>
        <position position="48"/>
    </location>
</feature>
<feature type="sequence conflict" description="In Ref. 4; AAI16871/AAI16873 and 1; AAA37883." evidence="5" ref="4 1">
    <original>K</original>
    <variation>Q</variation>
    <location>
        <position position="57"/>
    </location>
</feature>
<feature type="sequence conflict" description="In Ref. 4; AAI16871/AAI16873 and 1; AAA37883." evidence="5" ref="4 1">
    <original>QKAQS</original>
    <variation>KKAQA</variation>
    <location>
        <begin position="72"/>
        <end position="76"/>
    </location>
</feature>
<feature type="sequence conflict" description="In Ref. 4; AAI16871/AAI16873 and 1; AAA37883." evidence="5" ref="4 1">
    <original>ASKD</original>
    <variation>TSKA</variation>
    <location>
        <begin position="92"/>
        <end position="95"/>
    </location>
</feature>
<feature type="sequence conflict" description="In Ref. 4; AAI16871/AAI16873 and 1; AAA37883." evidence="5" ref="4 1">
    <original>S</original>
    <variation>P</variation>
    <location>
        <position position="132"/>
    </location>
</feature>
<feature type="sequence conflict" description="In Ref. 4; AAI16871/AAI16873 and 1; AAA37883." evidence="5" ref="4 1">
    <original>S</original>
    <variation>A</variation>
    <location>
        <position position="139"/>
    </location>
</feature>
<feature type="sequence conflict" description="In Ref. 4; AAI16871/AAI16873 and 1; AAA37883." evidence="5" ref="4 1">
    <original>R</original>
    <variation>S</variation>
    <location>
        <position position="149"/>
    </location>
</feature>
<feature type="sequence conflict" description="In Ref. 4; AAI16871/AAI16873 and 1; AAA37883." evidence="5" ref="4 1">
    <original>ANVLGRLR</original>
    <variation>VNLLARLS</variation>
    <location>
        <begin position="179"/>
        <end position="186"/>
    </location>
</feature>
<accession>Q61716</accession>
<accession>Q810G4</accession>
<comment type="function">
    <text evidence="1 3 4">Has antiviral and antiproliferative activities (PubMed:15254193). Produced by macrophages and stimulates the production of two enzymes: a protein kinase and an oligoadenylate synthetase (By similarity). During viral infection, mediates antiviral effect, either directly by inducing interferon-stimulated genes, either indirectly through stimulation of natural killer cells enabling them to control viral replication (PubMed:22912583).</text>
</comment>
<comment type="subcellular location">
    <subcellularLocation>
        <location evidence="1">Secreted</location>
    </subcellularLocation>
</comment>
<comment type="PTM">
    <text evidence="3">N-glycosylated (PubMed:15254193).</text>
</comment>
<comment type="similarity">
    <text evidence="5">Belongs to the alpha/beta interferon family.</text>
</comment>
<dbReference type="EMBL" id="M68944">
    <property type="protein sequence ID" value="AAA37883.1"/>
    <property type="molecule type" value="Genomic_DNA"/>
</dbReference>
<dbReference type="EMBL" id="AY225954">
    <property type="protein sequence ID" value="AAO63596.1"/>
    <property type="molecule type" value="Genomic_DNA"/>
</dbReference>
<dbReference type="EMBL" id="AL928605">
    <property type="status" value="NOT_ANNOTATED_CDS"/>
    <property type="molecule type" value="Genomic_DNA"/>
</dbReference>
<dbReference type="EMBL" id="BC116870">
    <property type="protein sequence ID" value="AAI16871.1"/>
    <property type="molecule type" value="mRNA"/>
</dbReference>
<dbReference type="EMBL" id="BC116872">
    <property type="protein sequence ID" value="AAI16873.1"/>
    <property type="molecule type" value="mRNA"/>
</dbReference>
<dbReference type="CCDS" id="CCDS38810.1"/>
<dbReference type="PIR" id="JH0468">
    <property type="entry name" value="JH0468"/>
</dbReference>
<dbReference type="RefSeq" id="NP_032359.2">
    <property type="nucleotide sequence ID" value="NM_008333.2"/>
</dbReference>
<dbReference type="SMR" id="Q61716"/>
<dbReference type="FunCoup" id="Q61716">
    <property type="interactions" value="1100"/>
</dbReference>
<dbReference type="STRING" id="10090.ENSMUSP00000127921"/>
<dbReference type="GlyCosmos" id="Q61716">
    <property type="glycosylation" value="1 site, No reported glycans"/>
</dbReference>
<dbReference type="GlyGen" id="Q61716">
    <property type="glycosylation" value="1 site"/>
</dbReference>
<dbReference type="iPTMnet" id="Q61716"/>
<dbReference type="PhosphoSitePlus" id="Q61716"/>
<dbReference type="PaxDb" id="10090-ENSMUSP00000127921"/>
<dbReference type="DNASU" id="15964"/>
<dbReference type="Ensembl" id="ENSMUST00000170428.3">
    <property type="protein sequence ID" value="ENSMUSP00000127921.2"/>
    <property type="gene ID" value="ENSMUSG00000100549.2"/>
</dbReference>
<dbReference type="GeneID" id="15964"/>
<dbReference type="KEGG" id="mmu:15964"/>
<dbReference type="UCSC" id="uc008tny.2">
    <property type="organism name" value="mouse"/>
</dbReference>
<dbReference type="AGR" id="MGI:109210"/>
<dbReference type="CTD" id="15964"/>
<dbReference type="MGI" id="MGI:109210">
    <property type="gene designation" value="Ifna11"/>
</dbReference>
<dbReference type="VEuPathDB" id="HostDB:ENSMUSG00000100549"/>
<dbReference type="eggNOG" id="ENOG502SQAC">
    <property type="taxonomic scope" value="Eukaryota"/>
</dbReference>
<dbReference type="GeneTree" id="ENSGT01000000214430"/>
<dbReference type="InParanoid" id="Q61716"/>
<dbReference type="OMA" id="RKYSPCA"/>
<dbReference type="OrthoDB" id="9529410at2759"/>
<dbReference type="PhylomeDB" id="Q61716"/>
<dbReference type="TreeFam" id="TF336177"/>
<dbReference type="Reactome" id="R-MMU-909733">
    <property type="pathway name" value="Interferon alpha/beta signaling"/>
</dbReference>
<dbReference type="Reactome" id="R-MMU-912694">
    <property type="pathway name" value="Regulation of IFNA/IFNB signaling"/>
</dbReference>
<dbReference type="BioGRID-ORCS" id="15964">
    <property type="hits" value="1 hit in 45 CRISPR screens"/>
</dbReference>
<dbReference type="PRO" id="PR:Q61716"/>
<dbReference type="Proteomes" id="UP000000589">
    <property type="component" value="Chromosome 4"/>
</dbReference>
<dbReference type="RNAct" id="Q61716">
    <property type="molecule type" value="protein"/>
</dbReference>
<dbReference type="Bgee" id="ENSMUSG00000100549">
    <property type="expression patterns" value="Expressed in submandibular gland and 1 other cell type or tissue"/>
</dbReference>
<dbReference type="GO" id="GO:0005615">
    <property type="term" value="C:extracellular space"/>
    <property type="evidence" value="ECO:0007669"/>
    <property type="project" value="UniProtKB-KW"/>
</dbReference>
<dbReference type="GO" id="GO:0005125">
    <property type="term" value="F:cytokine activity"/>
    <property type="evidence" value="ECO:0007669"/>
    <property type="project" value="UniProtKB-KW"/>
</dbReference>
<dbReference type="GO" id="GO:0005126">
    <property type="term" value="F:cytokine receptor binding"/>
    <property type="evidence" value="ECO:0007669"/>
    <property type="project" value="InterPro"/>
</dbReference>
<dbReference type="GO" id="GO:0051607">
    <property type="term" value="P:defense response to virus"/>
    <property type="evidence" value="ECO:0000314"/>
    <property type="project" value="UniProtKB"/>
</dbReference>
<dbReference type="GO" id="GO:0030101">
    <property type="term" value="P:natural killer cell activation"/>
    <property type="evidence" value="ECO:0000314"/>
    <property type="project" value="UniProtKB"/>
</dbReference>
<dbReference type="GO" id="GO:0008285">
    <property type="term" value="P:negative regulation of cell population proliferation"/>
    <property type="evidence" value="ECO:0000314"/>
    <property type="project" value="UniProtKB"/>
</dbReference>
<dbReference type="CDD" id="cd00095">
    <property type="entry name" value="IFab"/>
    <property type="match status" value="1"/>
</dbReference>
<dbReference type="FunFam" id="1.20.1250.10:FF:000001">
    <property type="entry name" value="Interferon alpha"/>
    <property type="match status" value="1"/>
</dbReference>
<dbReference type="Gene3D" id="1.20.1250.10">
    <property type="match status" value="1"/>
</dbReference>
<dbReference type="InterPro" id="IPR009079">
    <property type="entry name" value="4_helix_cytokine-like_core"/>
</dbReference>
<dbReference type="InterPro" id="IPR000471">
    <property type="entry name" value="Interferon_alpha/beta/delta"/>
</dbReference>
<dbReference type="PANTHER" id="PTHR11691:SF60">
    <property type="entry name" value="INTERFERON ALPHA-5"/>
    <property type="match status" value="1"/>
</dbReference>
<dbReference type="PANTHER" id="PTHR11691">
    <property type="entry name" value="TYPE I INTERFERON"/>
    <property type="match status" value="1"/>
</dbReference>
<dbReference type="Pfam" id="PF00143">
    <property type="entry name" value="Interferon"/>
    <property type="match status" value="1"/>
</dbReference>
<dbReference type="PRINTS" id="PR00266">
    <property type="entry name" value="INTERFERONAB"/>
</dbReference>
<dbReference type="SMART" id="SM00076">
    <property type="entry name" value="IFabd"/>
    <property type="match status" value="1"/>
</dbReference>
<dbReference type="SUPFAM" id="SSF47266">
    <property type="entry name" value="4-helical cytokines"/>
    <property type="match status" value="1"/>
</dbReference>
<dbReference type="PROSITE" id="PS00252">
    <property type="entry name" value="INTERFERON_A_B_D"/>
    <property type="match status" value="1"/>
</dbReference>
<sequence length="190" mass="21736">MARLCAFLMILIVMSYWSTCSLGCDLPHTYNLRNKRALKVLAQMRRLTPLSCLKDRKDFGFPLEKVDAQQIQKAQSIPVLRDLTQQILNLFASKDSSAAWNATLLDSFCNDLHQQLNDLQGCLMQQVGVQESPLTQEDSLLAVRIYFHRITVFLREKKHSPCAWEVVRAEVWRALSSSANVLGRLREEKA</sequence>
<gene>
    <name type="primary">Ifna11</name>
</gene>
<evidence type="ECO:0000250" key="1"/>
<evidence type="ECO:0000255" key="2"/>
<evidence type="ECO:0000269" key="3">
    <source>
    </source>
</evidence>
<evidence type="ECO:0000269" key="4">
    <source>
    </source>
</evidence>
<evidence type="ECO:0000305" key="5"/>
<name>IFNAB_MOUSE</name>